<evidence type="ECO:0000250" key="1">
    <source>
        <dbReference type="UniProtKB" id="P60770"/>
    </source>
</evidence>
<evidence type="ECO:0000269" key="2">
    <source>
    </source>
</evidence>
<evidence type="ECO:0000303" key="3">
    <source>
    </source>
</evidence>
<evidence type="ECO:0000305" key="4"/>
<name>3S13_MICSU</name>
<comment type="function">
    <text evidence="2">Produces peripheral paralysis by blocking neuromuscular transmission at the postsynaptic site. Binds to and inhibits the endogenous nicotinic acetylcholine receptors (nAChR) in human rhabdomyosarcoma TE 671 cell line with an IC(50) of 346 mM. This neurotoxin is lethal to mice by intraperitoneal injection and to zebrafish by injection at the back of the dorsolateral region.</text>
</comment>
<comment type="subcellular location">
    <subcellularLocation>
        <location evidence="2">Secreted</location>
    </subcellularLocation>
</comment>
<comment type="tissue specificity">
    <text evidence="4">Expressed by the venom gland.</text>
</comment>
<comment type="similarity">
    <text evidence="4">Belongs to the three-finger toxin family. Short-chain subfamily. Type I alpha-neurotoxin sub-subfamily.</text>
</comment>
<organism>
    <name type="scientific">Micrurus surinamensis</name>
    <name type="common">Surinam coral snake</name>
    <dbReference type="NCBI Taxonomy" id="129470"/>
    <lineage>
        <taxon>Eukaryota</taxon>
        <taxon>Metazoa</taxon>
        <taxon>Chordata</taxon>
        <taxon>Craniata</taxon>
        <taxon>Vertebrata</taxon>
        <taxon>Euteleostomi</taxon>
        <taxon>Lepidosauria</taxon>
        <taxon>Squamata</taxon>
        <taxon>Bifurcata</taxon>
        <taxon>Unidentata</taxon>
        <taxon>Episquamata</taxon>
        <taxon>Toxicofera</taxon>
        <taxon>Serpentes</taxon>
        <taxon>Colubroidea</taxon>
        <taxon>Elapidae</taxon>
        <taxon>Elapinae</taxon>
        <taxon>Micrurus</taxon>
    </lineage>
</organism>
<reference key="1">
    <citation type="journal article" date="2008" name="Proteomics">
        <title>Proteomic analysis of the venom from the fish eating coral snake Micrurus surinamensis: novel toxins, their function and phylogeny.</title>
        <authorList>
            <person name="Olamendi-Portugal T."/>
            <person name="Batista C.V.F."/>
            <person name="Restano-Cassulini R."/>
            <person name="Pando V."/>
            <person name="Villa-Hernandez O."/>
            <person name="Zavaleta-Martinez-Vargas A."/>
            <person name="Salas-Arruz M.C."/>
            <person name="Rodriguez de la Vega R.C."/>
            <person name="Becerril B."/>
            <person name="Possani L.D."/>
        </authorList>
    </citation>
    <scope>PROTEIN SEQUENCE</scope>
    <scope>FUNCTION</scope>
    <scope>SUBCELLULAR LOCATION</scope>
    <source>
        <tissue>Venom</tissue>
    </source>
</reference>
<proteinExistence type="evidence at protein level"/>
<dbReference type="SMR" id="P86097"/>
<dbReference type="GO" id="GO:0005576">
    <property type="term" value="C:extracellular region"/>
    <property type="evidence" value="ECO:0000314"/>
    <property type="project" value="UniProtKB"/>
</dbReference>
<dbReference type="GO" id="GO:0030550">
    <property type="term" value="F:acetylcholine receptor inhibitor activity"/>
    <property type="evidence" value="ECO:0000314"/>
    <property type="project" value="UniProtKB"/>
</dbReference>
<dbReference type="GO" id="GO:0099106">
    <property type="term" value="F:ion channel regulator activity"/>
    <property type="evidence" value="ECO:0007669"/>
    <property type="project" value="UniProtKB-KW"/>
</dbReference>
<dbReference type="GO" id="GO:0090729">
    <property type="term" value="F:toxin activity"/>
    <property type="evidence" value="ECO:0000314"/>
    <property type="project" value="UniProtKB"/>
</dbReference>
<dbReference type="GO" id="GO:0044504">
    <property type="term" value="P:modulation of receptor activity in another organism"/>
    <property type="evidence" value="ECO:0000314"/>
    <property type="project" value="UniProtKB"/>
</dbReference>
<dbReference type="CDD" id="cd00206">
    <property type="entry name" value="TFP_snake_toxin"/>
    <property type="match status" value="1"/>
</dbReference>
<dbReference type="FunFam" id="2.10.60.10:FF:000024">
    <property type="entry name" value="Cytotoxin 1"/>
    <property type="match status" value="1"/>
</dbReference>
<dbReference type="Gene3D" id="2.10.60.10">
    <property type="entry name" value="CD59"/>
    <property type="match status" value="1"/>
</dbReference>
<dbReference type="InterPro" id="IPR003571">
    <property type="entry name" value="Snake_3FTx"/>
</dbReference>
<dbReference type="InterPro" id="IPR045860">
    <property type="entry name" value="Snake_toxin-like_sf"/>
</dbReference>
<dbReference type="InterPro" id="IPR018354">
    <property type="entry name" value="Snake_toxin_con_site"/>
</dbReference>
<dbReference type="InterPro" id="IPR054131">
    <property type="entry name" value="Toxin_cobra-type"/>
</dbReference>
<dbReference type="Pfam" id="PF21947">
    <property type="entry name" value="Toxin_cobra-type"/>
    <property type="match status" value="1"/>
</dbReference>
<dbReference type="SUPFAM" id="SSF57302">
    <property type="entry name" value="Snake toxin-like"/>
    <property type="match status" value="1"/>
</dbReference>
<dbReference type="PROSITE" id="PS00272">
    <property type="entry name" value="SNAKE_TOXIN"/>
    <property type="match status" value="1"/>
</dbReference>
<sequence length="60" mass="6945">LICYSQMYNEIIKTCENGETTCYSKTWRDHRGTRLEKGCGCPPVKYDMIVKCCKTDRCGN</sequence>
<protein>
    <recommendedName>
        <fullName evidence="4">Three-finger toxin MS3</fullName>
    </recommendedName>
    <alternativeName>
        <fullName evidence="3">Short neurotoxin MS3</fullName>
    </alternativeName>
</protein>
<accession>P86097</accession>
<feature type="chain" id="PRO_0000371723" description="Three-finger toxin MS3" evidence="2">
    <location>
        <begin position="1"/>
        <end position="60"/>
    </location>
</feature>
<feature type="disulfide bond" evidence="1">
    <location>
        <begin position="3"/>
        <end position="22"/>
    </location>
</feature>
<feature type="disulfide bond" evidence="1">
    <location>
        <begin position="15"/>
        <end position="39"/>
    </location>
</feature>
<feature type="disulfide bond" evidence="1">
    <location>
        <begin position="41"/>
        <end position="52"/>
    </location>
</feature>
<feature type="disulfide bond" evidence="1">
    <location>
        <begin position="53"/>
        <end position="58"/>
    </location>
</feature>
<keyword id="KW-0008">Acetylcholine receptor inhibiting toxin</keyword>
<keyword id="KW-0903">Direct protein sequencing</keyword>
<keyword id="KW-1015">Disulfide bond</keyword>
<keyword id="KW-0872">Ion channel impairing toxin</keyword>
<keyword id="KW-0528">Neurotoxin</keyword>
<keyword id="KW-0629">Postsynaptic neurotoxin</keyword>
<keyword id="KW-0964">Secreted</keyword>
<keyword id="KW-0800">Toxin</keyword>